<proteinExistence type="evidence at protein level"/>
<name>EVA1B_HUMAN</name>
<protein>
    <recommendedName>
        <fullName>Protein eva-1 homolog B</fullName>
    </recommendedName>
    <alternativeName>
        <fullName>Protein FAM176B</fullName>
    </alternativeName>
</protein>
<reference key="1">
    <citation type="journal article" date="2004" name="Nat. Genet.">
        <title>Complete sequencing and characterization of 21,243 full-length human cDNAs.</title>
        <authorList>
            <person name="Ota T."/>
            <person name="Suzuki Y."/>
            <person name="Nishikawa T."/>
            <person name="Otsuki T."/>
            <person name="Sugiyama T."/>
            <person name="Irie R."/>
            <person name="Wakamatsu A."/>
            <person name="Hayashi K."/>
            <person name="Sato H."/>
            <person name="Nagai K."/>
            <person name="Kimura K."/>
            <person name="Makita H."/>
            <person name="Sekine M."/>
            <person name="Obayashi M."/>
            <person name="Nishi T."/>
            <person name="Shibahara T."/>
            <person name="Tanaka T."/>
            <person name="Ishii S."/>
            <person name="Yamamoto J."/>
            <person name="Saito K."/>
            <person name="Kawai Y."/>
            <person name="Isono Y."/>
            <person name="Nakamura Y."/>
            <person name="Nagahari K."/>
            <person name="Murakami K."/>
            <person name="Yasuda T."/>
            <person name="Iwayanagi T."/>
            <person name="Wagatsuma M."/>
            <person name="Shiratori A."/>
            <person name="Sudo H."/>
            <person name="Hosoiri T."/>
            <person name="Kaku Y."/>
            <person name="Kodaira H."/>
            <person name="Kondo H."/>
            <person name="Sugawara M."/>
            <person name="Takahashi M."/>
            <person name="Kanda K."/>
            <person name="Yokoi T."/>
            <person name="Furuya T."/>
            <person name="Kikkawa E."/>
            <person name="Omura Y."/>
            <person name="Abe K."/>
            <person name="Kamihara K."/>
            <person name="Katsuta N."/>
            <person name="Sato K."/>
            <person name="Tanikawa M."/>
            <person name="Yamazaki M."/>
            <person name="Ninomiya K."/>
            <person name="Ishibashi T."/>
            <person name="Yamashita H."/>
            <person name="Murakawa K."/>
            <person name="Fujimori K."/>
            <person name="Tanai H."/>
            <person name="Kimata M."/>
            <person name="Watanabe M."/>
            <person name="Hiraoka S."/>
            <person name="Chiba Y."/>
            <person name="Ishida S."/>
            <person name="Ono Y."/>
            <person name="Takiguchi S."/>
            <person name="Watanabe S."/>
            <person name="Yosida M."/>
            <person name="Hotuta T."/>
            <person name="Kusano J."/>
            <person name="Kanehori K."/>
            <person name="Takahashi-Fujii A."/>
            <person name="Hara H."/>
            <person name="Tanase T.-O."/>
            <person name="Nomura Y."/>
            <person name="Togiya S."/>
            <person name="Komai F."/>
            <person name="Hara R."/>
            <person name="Takeuchi K."/>
            <person name="Arita M."/>
            <person name="Imose N."/>
            <person name="Musashino K."/>
            <person name="Yuuki H."/>
            <person name="Oshima A."/>
            <person name="Sasaki N."/>
            <person name="Aotsuka S."/>
            <person name="Yoshikawa Y."/>
            <person name="Matsunawa H."/>
            <person name="Ichihara T."/>
            <person name="Shiohata N."/>
            <person name="Sano S."/>
            <person name="Moriya S."/>
            <person name="Momiyama H."/>
            <person name="Satoh N."/>
            <person name="Takami S."/>
            <person name="Terashima Y."/>
            <person name="Suzuki O."/>
            <person name="Nakagawa S."/>
            <person name="Senoh A."/>
            <person name="Mizoguchi H."/>
            <person name="Goto Y."/>
            <person name="Shimizu F."/>
            <person name="Wakebe H."/>
            <person name="Hishigaki H."/>
            <person name="Watanabe T."/>
            <person name="Sugiyama A."/>
            <person name="Takemoto M."/>
            <person name="Kawakami B."/>
            <person name="Yamazaki M."/>
            <person name="Watanabe K."/>
            <person name="Kumagai A."/>
            <person name="Itakura S."/>
            <person name="Fukuzumi Y."/>
            <person name="Fujimori Y."/>
            <person name="Komiyama M."/>
            <person name="Tashiro H."/>
            <person name="Tanigami A."/>
            <person name="Fujiwara T."/>
            <person name="Ono T."/>
            <person name="Yamada K."/>
            <person name="Fujii Y."/>
            <person name="Ozaki K."/>
            <person name="Hirao M."/>
            <person name="Ohmori Y."/>
            <person name="Kawabata A."/>
            <person name="Hikiji T."/>
            <person name="Kobatake N."/>
            <person name="Inagaki H."/>
            <person name="Ikema Y."/>
            <person name="Okamoto S."/>
            <person name="Okitani R."/>
            <person name="Kawakami T."/>
            <person name="Noguchi S."/>
            <person name="Itoh T."/>
            <person name="Shigeta K."/>
            <person name="Senba T."/>
            <person name="Matsumura K."/>
            <person name="Nakajima Y."/>
            <person name="Mizuno T."/>
            <person name="Morinaga M."/>
            <person name="Sasaki M."/>
            <person name="Togashi T."/>
            <person name="Oyama M."/>
            <person name="Hata H."/>
            <person name="Watanabe M."/>
            <person name="Komatsu T."/>
            <person name="Mizushima-Sugano J."/>
            <person name="Satoh T."/>
            <person name="Shirai Y."/>
            <person name="Takahashi Y."/>
            <person name="Nakagawa K."/>
            <person name="Okumura K."/>
            <person name="Nagase T."/>
            <person name="Nomura N."/>
            <person name="Kikuchi H."/>
            <person name="Masuho Y."/>
            <person name="Yamashita R."/>
            <person name="Nakai K."/>
            <person name="Yada T."/>
            <person name="Nakamura Y."/>
            <person name="Ohara O."/>
            <person name="Isogai T."/>
            <person name="Sugano S."/>
        </authorList>
    </citation>
    <scope>NUCLEOTIDE SEQUENCE [LARGE SCALE MRNA]</scope>
</reference>
<reference key="2">
    <citation type="journal article" date="2006" name="Nature">
        <title>The DNA sequence and biological annotation of human chromosome 1.</title>
        <authorList>
            <person name="Gregory S.G."/>
            <person name="Barlow K.F."/>
            <person name="McLay K.E."/>
            <person name="Kaul R."/>
            <person name="Swarbreck D."/>
            <person name="Dunham A."/>
            <person name="Scott C.E."/>
            <person name="Howe K.L."/>
            <person name="Woodfine K."/>
            <person name="Spencer C.C.A."/>
            <person name="Jones M.C."/>
            <person name="Gillson C."/>
            <person name="Searle S."/>
            <person name="Zhou Y."/>
            <person name="Kokocinski F."/>
            <person name="McDonald L."/>
            <person name="Evans R."/>
            <person name="Phillips K."/>
            <person name="Atkinson A."/>
            <person name="Cooper R."/>
            <person name="Jones C."/>
            <person name="Hall R.E."/>
            <person name="Andrews T.D."/>
            <person name="Lloyd C."/>
            <person name="Ainscough R."/>
            <person name="Almeida J.P."/>
            <person name="Ambrose K.D."/>
            <person name="Anderson F."/>
            <person name="Andrew R.W."/>
            <person name="Ashwell R.I.S."/>
            <person name="Aubin K."/>
            <person name="Babbage A.K."/>
            <person name="Bagguley C.L."/>
            <person name="Bailey J."/>
            <person name="Beasley H."/>
            <person name="Bethel G."/>
            <person name="Bird C.P."/>
            <person name="Bray-Allen S."/>
            <person name="Brown J.Y."/>
            <person name="Brown A.J."/>
            <person name="Buckley D."/>
            <person name="Burton J."/>
            <person name="Bye J."/>
            <person name="Carder C."/>
            <person name="Chapman J.C."/>
            <person name="Clark S.Y."/>
            <person name="Clarke G."/>
            <person name="Clee C."/>
            <person name="Cobley V."/>
            <person name="Collier R.E."/>
            <person name="Corby N."/>
            <person name="Coville G.J."/>
            <person name="Davies J."/>
            <person name="Deadman R."/>
            <person name="Dunn M."/>
            <person name="Earthrowl M."/>
            <person name="Ellington A.G."/>
            <person name="Errington H."/>
            <person name="Frankish A."/>
            <person name="Frankland J."/>
            <person name="French L."/>
            <person name="Garner P."/>
            <person name="Garnett J."/>
            <person name="Gay L."/>
            <person name="Ghori M.R.J."/>
            <person name="Gibson R."/>
            <person name="Gilby L.M."/>
            <person name="Gillett W."/>
            <person name="Glithero R.J."/>
            <person name="Grafham D.V."/>
            <person name="Griffiths C."/>
            <person name="Griffiths-Jones S."/>
            <person name="Grocock R."/>
            <person name="Hammond S."/>
            <person name="Harrison E.S.I."/>
            <person name="Hart E."/>
            <person name="Haugen E."/>
            <person name="Heath P.D."/>
            <person name="Holmes S."/>
            <person name="Holt K."/>
            <person name="Howden P.J."/>
            <person name="Hunt A.R."/>
            <person name="Hunt S.E."/>
            <person name="Hunter G."/>
            <person name="Isherwood J."/>
            <person name="James R."/>
            <person name="Johnson C."/>
            <person name="Johnson D."/>
            <person name="Joy A."/>
            <person name="Kay M."/>
            <person name="Kershaw J.K."/>
            <person name="Kibukawa M."/>
            <person name="Kimberley A.M."/>
            <person name="King A."/>
            <person name="Knights A.J."/>
            <person name="Lad H."/>
            <person name="Laird G."/>
            <person name="Lawlor S."/>
            <person name="Leongamornlert D.A."/>
            <person name="Lloyd D.M."/>
            <person name="Loveland J."/>
            <person name="Lovell J."/>
            <person name="Lush M.J."/>
            <person name="Lyne R."/>
            <person name="Martin S."/>
            <person name="Mashreghi-Mohammadi M."/>
            <person name="Matthews L."/>
            <person name="Matthews N.S.W."/>
            <person name="McLaren S."/>
            <person name="Milne S."/>
            <person name="Mistry S."/>
            <person name="Moore M.J.F."/>
            <person name="Nickerson T."/>
            <person name="O'Dell C.N."/>
            <person name="Oliver K."/>
            <person name="Palmeiri A."/>
            <person name="Palmer S.A."/>
            <person name="Parker A."/>
            <person name="Patel D."/>
            <person name="Pearce A.V."/>
            <person name="Peck A.I."/>
            <person name="Pelan S."/>
            <person name="Phelps K."/>
            <person name="Phillimore B.J."/>
            <person name="Plumb R."/>
            <person name="Rajan J."/>
            <person name="Raymond C."/>
            <person name="Rouse G."/>
            <person name="Saenphimmachak C."/>
            <person name="Sehra H.K."/>
            <person name="Sheridan E."/>
            <person name="Shownkeen R."/>
            <person name="Sims S."/>
            <person name="Skuce C.D."/>
            <person name="Smith M."/>
            <person name="Steward C."/>
            <person name="Subramanian S."/>
            <person name="Sycamore N."/>
            <person name="Tracey A."/>
            <person name="Tromans A."/>
            <person name="Van Helmond Z."/>
            <person name="Wall M."/>
            <person name="Wallis J.M."/>
            <person name="White S."/>
            <person name="Whitehead S.L."/>
            <person name="Wilkinson J.E."/>
            <person name="Willey D.L."/>
            <person name="Williams H."/>
            <person name="Wilming L."/>
            <person name="Wray P.W."/>
            <person name="Wu Z."/>
            <person name="Coulson A."/>
            <person name="Vaudin M."/>
            <person name="Sulston J.E."/>
            <person name="Durbin R.M."/>
            <person name="Hubbard T."/>
            <person name="Wooster R."/>
            <person name="Dunham I."/>
            <person name="Carter N.P."/>
            <person name="McVean G."/>
            <person name="Ross M.T."/>
            <person name="Harrow J."/>
            <person name="Olson M.V."/>
            <person name="Beck S."/>
            <person name="Rogers J."/>
            <person name="Bentley D.R."/>
        </authorList>
    </citation>
    <scope>NUCLEOTIDE SEQUENCE [LARGE SCALE GENOMIC DNA]</scope>
</reference>
<reference key="3">
    <citation type="submission" date="2005-09" db="EMBL/GenBank/DDBJ databases">
        <authorList>
            <person name="Mural R.J."/>
            <person name="Istrail S."/>
            <person name="Sutton G.G."/>
            <person name="Florea L."/>
            <person name="Halpern A.L."/>
            <person name="Mobarry C.M."/>
            <person name="Lippert R."/>
            <person name="Walenz B."/>
            <person name="Shatkay H."/>
            <person name="Dew I."/>
            <person name="Miller J.R."/>
            <person name="Flanigan M.J."/>
            <person name="Edwards N.J."/>
            <person name="Bolanos R."/>
            <person name="Fasulo D."/>
            <person name="Halldorsson B.V."/>
            <person name="Hannenhalli S."/>
            <person name="Turner R."/>
            <person name="Yooseph S."/>
            <person name="Lu F."/>
            <person name="Nusskern D.R."/>
            <person name="Shue B.C."/>
            <person name="Zheng X.H."/>
            <person name="Zhong F."/>
            <person name="Delcher A.L."/>
            <person name="Huson D.H."/>
            <person name="Kravitz S.A."/>
            <person name="Mouchard L."/>
            <person name="Reinert K."/>
            <person name="Remington K.A."/>
            <person name="Clark A.G."/>
            <person name="Waterman M.S."/>
            <person name="Eichler E.E."/>
            <person name="Adams M.D."/>
            <person name="Hunkapiller M.W."/>
            <person name="Myers E.W."/>
            <person name="Venter J.C."/>
        </authorList>
    </citation>
    <scope>NUCLEOTIDE SEQUENCE [LARGE SCALE GENOMIC DNA]</scope>
</reference>
<reference key="4">
    <citation type="journal article" date="2004" name="Genome Res.">
        <title>The status, quality, and expansion of the NIH full-length cDNA project: the Mammalian Gene Collection (MGC).</title>
        <authorList>
            <consortium name="The MGC Project Team"/>
        </authorList>
    </citation>
    <scope>NUCLEOTIDE SEQUENCE [LARGE SCALE MRNA]</scope>
    <source>
        <tissue>Bone</tissue>
        <tissue>Ovary</tissue>
    </source>
</reference>
<reference key="5">
    <citation type="journal article" date="2008" name="Proteomics">
        <title>Large-scale phosphoproteome analysis of human liver tissue by enrichment and fractionation of phosphopeptides with strong anion exchange chromatography.</title>
        <authorList>
            <person name="Han G."/>
            <person name="Ye M."/>
            <person name="Zhou H."/>
            <person name="Jiang X."/>
            <person name="Feng S."/>
            <person name="Jiang X."/>
            <person name="Tian R."/>
            <person name="Wan D."/>
            <person name="Zou H."/>
            <person name="Gu J."/>
        </authorList>
    </citation>
    <scope>IDENTIFICATION BY MASS SPECTROMETRY [LARGE SCALE ANALYSIS]</scope>
    <source>
        <tissue>Liver</tissue>
    </source>
</reference>
<reference key="6">
    <citation type="journal article" date="2014" name="J. Proteomics">
        <title>An enzyme assisted RP-RPLC approach for in-depth analysis of human liver phosphoproteome.</title>
        <authorList>
            <person name="Bian Y."/>
            <person name="Song C."/>
            <person name="Cheng K."/>
            <person name="Dong M."/>
            <person name="Wang F."/>
            <person name="Huang J."/>
            <person name="Sun D."/>
            <person name="Wang L."/>
            <person name="Ye M."/>
            <person name="Zou H."/>
        </authorList>
    </citation>
    <scope>IDENTIFICATION BY MASS SPECTROMETRY [LARGE SCALE ANALYSIS]</scope>
    <source>
        <tissue>Liver</tissue>
    </source>
</reference>
<keyword id="KW-0472">Membrane</keyword>
<keyword id="KW-0597">Phosphoprotein</keyword>
<keyword id="KW-1267">Proteomics identification</keyword>
<keyword id="KW-1185">Reference proteome</keyword>
<keyword id="KW-0812">Transmembrane</keyword>
<keyword id="KW-1133">Transmembrane helix</keyword>
<accession>Q9NVM1</accession>
<accession>D3DPS7</accession>
<gene>
    <name type="primary">EVA1B</name>
    <name type="synonym">C1orf78</name>
    <name type="synonym">FAM176B</name>
</gene>
<evidence type="ECO:0000250" key="1">
    <source>
        <dbReference type="UniProtKB" id="Q8K2Y3"/>
    </source>
</evidence>
<evidence type="ECO:0000255" key="2"/>
<evidence type="ECO:0000256" key="3">
    <source>
        <dbReference type="SAM" id="MobiDB-lite"/>
    </source>
</evidence>
<evidence type="ECO:0000305" key="4"/>
<organism>
    <name type="scientific">Homo sapiens</name>
    <name type="common">Human</name>
    <dbReference type="NCBI Taxonomy" id="9606"/>
    <lineage>
        <taxon>Eukaryota</taxon>
        <taxon>Metazoa</taxon>
        <taxon>Chordata</taxon>
        <taxon>Craniata</taxon>
        <taxon>Vertebrata</taxon>
        <taxon>Euteleostomi</taxon>
        <taxon>Mammalia</taxon>
        <taxon>Eutheria</taxon>
        <taxon>Euarchontoglires</taxon>
        <taxon>Primates</taxon>
        <taxon>Haplorrhini</taxon>
        <taxon>Catarrhini</taxon>
        <taxon>Hominidae</taxon>
        <taxon>Homo</taxon>
    </lineage>
</organism>
<feature type="chain" id="PRO_0000271112" description="Protein eva-1 homolog B">
    <location>
        <begin position="1"/>
        <end position="165"/>
    </location>
</feature>
<feature type="transmembrane region" description="Helical" evidence="2">
    <location>
        <begin position="29"/>
        <end position="49"/>
    </location>
</feature>
<feature type="region of interest" description="Disordered" evidence="3">
    <location>
        <begin position="57"/>
        <end position="109"/>
    </location>
</feature>
<feature type="region of interest" description="Disordered" evidence="3">
    <location>
        <begin position="143"/>
        <end position="165"/>
    </location>
</feature>
<feature type="compositionally biased region" description="Acidic residues" evidence="3">
    <location>
        <begin position="74"/>
        <end position="84"/>
    </location>
</feature>
<feature type="modified residue" description="Phosphothreonine" evidence="1">
    <location>
        <position position="85"/>
    </location>
</feature>
<feature type="modified residue" description="Phosphothreonine" evidence="1">
    <location>
        <position position="148"/>
    </location>
</feature>
<feature type="modified residue" description="Phosphothreonine" evidence="1">
    <location>
        <position position="158"/>
    </location>
</feature>
<comment type="interaction">
    <interactant intactId="EBI-10314666">
        <id>Q9NVM1</id>
    </interactant>
    <interactant intactId="EBI-354007">
        <id>P04083</id>
        <label>ANXA1</label>
    </interactant>
    <organismsDiffer>false</organismsDiffer>
    <experiments>3</experiments>
</comment>
<comment type="interaction">
    <interactant intactId="EBI-10314666">
        <id>Q9NVM1</id>
    </interactant>
    <interactant intactId="EBI-1049597">
        <id>P27797</id>
        <label>CALR</label>
    </interactant>
    <organismsDiffer>false</organismsDiffer>
    <experiments>3</experiments>
</comment>
<comment type="interaction">
    <interactant intactId="EBI-10314666">
        <id>Q9NVM1</id>
    </interactant>
    <interactant intactId="EBI-3867333">
        <id>A8MQ03</id>
        <label>CYSRT1</label>
    </interactant>
    <organismsDiffer>false</organismsDiffer>
    <experiments>3</experiments>
</comment>
<comment type="interaction">
    <interactant intactId="EBI-10314666">
        <id>Q9NVM1</id>
    </interactant>
    <interactant intactId="EBI-351007">
        <id>P36957</id>
        <label>DLST</label>
    </interactant>
    <organismsDiffer>false</organismsDiffer>
    <experiments>3</experiments>
</comment>
<comment type="interaction">
    <interactant intactId="EBI-10314666">
        <id>Q9NVM1</id>
    </interactant>
    <interactant intactId="EBI-740785">
        <id>P49639</id>
        <label>HOXA1</label>
    </interactant>
    <organismsDiffer>false</organismsDiffer>
    <experiments>3</experiments>
</comment>
<comment type="interaction">
    <interactant intactId="EBI-10314666">
        <id>Q9NVM1</id>
    </interactant>
    <interactant intactId="EBI-1055945">
        <id>Q8TDX7</id>
        <label>NEK7</label>
    </interactant>
    <organismsDiffer>false</organismsDiffer>
    <experiments>3</experiments>
</comment>
<comment type="interaction">
    <interactant intactId="EBI-10314666">
        <id>Q9NVM1</id>
    </interactant>
    <interactant intactId="EBI-347996">
        <id>O43765</id>
        <label>SGTA</label>
    </interactant>
    <organismsDiffer>false</organismsDiffer>
    <experiments>6</experiments>
</comment>
<comment type="subcellular location">
    <subcellularLocation>
        <location evidence="4">Membrane</location>
        <topology evidence="4">Single-pass membrane protein</topology>
    </subcellularLocation>
</comment>
<comment type="similarity">
    <text evidence="4">Belongs to the EVA1 family.</text>
</comment>
<dbReference type="EMBL" id="AK001509">
    <property type="protein sequence ID" value="BAA91729.1"/>
    <property type="molecule type" value="mRNA"/>
</dbReference>
<dbReference type="EMBL" id="AL591845">
    <property type="status" value="NOT_ANNOTATED_CDS"/>
    <property type="molecule type" value="Genomic_DNA"/>
</dbReference>
<dbReference type="EMBL" id="CH471059">
    <property type="protein sequence ID" value="EAX07377.1"/>
    <property type="molecule type" value="Genomic_DNA"/>
</dbReference>
<dbReference type="EMBL" id="CH471059">
    <property type="protein sequence ID" value="EAX07378.1"/>
    <property type="molecule type" value="Genomic_DNA"/>
</dbReference>
<dbReference type="EMBL" id="BC071697">
    <property type="protein sequence ID" value="AAH71697.1"/>
    <property type="molecule type" value="mRNA"/>
</dbReference>
<dbReference type="EMBL" id="BC006241">
    <property type="protein sequence ID" value="AAH06241.1"/>
    <property type="molecule type" value="mRNA"/>
</dbReference>
<dbReference type="CCDS" id="CCDS406.1"/>
<dbReference type="RefSeq" id="NP_001291691.1">
    <property type="nucleotide sequence ID" value="NM_001304762.2"/>
</dbReference>
<dbReference type="RefSeq" id="NP_060636.1">
    <property type="nucleotide sequence ID" value="NM_018166.3"/>
</dbReference>
<dbReference type="RefSeq" id="XP_016857116.1">
    <property type="nucleotide sequence ID" value="XM_017001627.1"/>
</dbReference>
<dbReference type="SMR" id="Q9NVM1"/>
<dbReference type="BioGRID" id="120491">
    <property type="interactions" value="75"/>
</dbReference>
<dbReference type="FunCoup" id="Q9NVM1">
    <property type="interactions" value="113"/>
</dbReference>
<dbReference type="IntAct" id="Q9NVM1">
    <property type="interactions" value="72"/>
</dbReference>
<dbReference type="MINT" id="Q9NVM1"/>
<dbReference type="STRING" id="9606.ENSP00000270824"/>
<dbReference type="GlyGen" id="Q9NVM1">
    <property type="glycosylation" value="1 site"/>
</dbReference>
<dbReference type="iPTMnet" id="Q9NVM1"/>
<dbReference type="PhosphoSitePlus" id="Q9NVM1"/>
<dbReference type="BioMuta" id="EVA1B"/>
<dbReference type="DMDM" id="74752997"/>
<dbReference type="jPOST" id="Q9NVM1"/>
<dbReference type="MassIVE" id="Q9NVM1"/>
<dbReference type="PaxDb" id="9606-ENSP00000270824"/>
<dbReference type="PeptideAtlas" id="Q9NVM1"/>
<dbReference type="ProteomicsDB" id="82825"/>
<dbReference type="Pumba" id="Q9NVM1"/>
<dbReference type="TopDownProteomics" id="Q9NVM1"/>
<dbReference type="Antibodypedia" id="60829">
    <property type="antibodies" value="19 antibodies from 9 providers"/>
</dbReference>
<dbReference type="DNASU" id="55194"/>
<dbReference type="Ensembl" id="ENST00000270824.1">
    <property type="protein sequence ID" value="ENSP00000270824.1"/>
    <property type="gene ID" value="ENSG00000142694.7"/>
</dbReference>
<dbReference type="Ensembl" id="ENST00000490466.2">
    <property type="protein sequence ID" value="ENSP00000507013.1"/>
    <property type="gene ID" value="ENSG00000142694.7"/>
</dbReference>
<dbReference type="GeneID" id="55194"/>
<dbReference type="KEGG" id="hsa:55194"/>
<dbReference type="MANE-Select" id="ENST00000490466.2">
    <property type="protein sequence ID" value="ENSP00000507013.1"/>
    <property type="RefSeq nucleotide sequence ID" value="NM_001304762.2"/>
    <property type="RefSeq protein sequence ID" value="NP_001291691.1"/>
</dbReference>
<dbReference type="UCSC" id="uc001caj.1">
    <property type="organism name" value="human"/>
</dbReference>
<dbReference type="AGR" id="HGNC:25558"/>
<dbReference type="CTD" id="55194"/>
<dbReference type="DisGeNET" id="55194"/>
<dbReference type="GeneCards" id="EVA1B"/>
<dbReference type="HGNC" id="HGNC:25558">
    <property type="gene designation" value="EVA1B"/>
</dbReference>
<dbReference type="HPA" id="ENSG00000142694">
    <property type="expression patterns" value="Low tissue specificity"/>
</dbReference>
<dbReference type="neXtProt" id="NX_Q9NVM1"/>
<dbReference type="OpenTargets" id="ENSG00000142694"/>
<dbReference type="PharmGKB" id="PA162387367"/>
<dbReference type="VEuPathDB" id="HostDB:ENSG00000142694"/>
<dbReference type="eggNOG" id="ENOG502RYRK">
    <property type="taxonomic scope" value="Eukaryota"/>
</dbReference>
<dbReference type="GeneTree" id="ENSGT00940000154096"/>
<dbReference type="HOGENOM" id="CLU_104871_0_0_1"/>
<dbReference type="InParanoid" id="Q9NVM1"/>
<dbReference type="OMA" id="ISCAPHP"/>
<dbReference type="OrthoDB" id="8956386at2759"/>
<dbReference type="PAN-GO" id="Q9NVM1">
    <property type="GO annotations" value="0 GO annotations based on evolutionary models"/>
</dbReference>
<dbReference type="PhylomeDB" id="Q9NVM1"/>
<dbReference type="TreeFam" id="TF352986"/>
<dbReference type="PathwayCommons" id="Q9NVM1"/>
<dbReference type="SignaLink" id="Q9NVM1"/>
<dbReference type="BioGRID-ORCS" id="55194">
    <property type="hits" value="13 hits in 1158 CRISPR screens"/>
</dbReference>
<dbReference type="GenomeRNAi" id="55194"/>
<dbReference type="Pharos" id="Q9NVM1">
    <property type="development level" value="Tdark"/>
</dbReference>
<dbReference type="PRO" id="PR:Q9NVM1"/>
<dbReference type="Proteomes" id="UP000005640">
    <property type="component" value="Chromosome 1"/>
</dbReference>
<dbReference type="RNAct" id="Q9NVM1">
    <property type="molecule type" value="protein"/>
</dbReference>
<dbReference type="Bgee" id="ENSG00000142694">
    <property type="expression patterns" value="Expressed in descending thoracic aorta and 140 other cell types or tissues"/>
</dbReference>
<dbReference type="GO" id="GO:0016020">
    <property type="term" value="C:membrane"/>
    <property type="evidence" value="ECO:0007669"/>
    <property type="project" value="UniProtKB-SubCell"/>
</dbReference>
<dbReference type="InterPro" id="IPR052461">
    <property type="entry name" value="EVA1_A/B"/>
</dbReference>
<dbReference type="InterPro" id="IPR039500">
    <property type="entry name" value="EVA1_dom"/>
</dbReference>
<dbReference type="PANTHER" id="PTHR48422:SF2">
    <property type="entry name" value="PROTEIN EVA-1 HOMOLOG B"/>
    <property type="match status" value="1"/>
</dbReference>
<dbReference type="PANTHER" id="PTHR48422">
    <property type="entry name" value="PROTEIN EVA-1 HOMOLOG B-RELATED"/>
    <property type="match status" value="1"/>
</dbReference>
<dbReference type="Pfam" id="PF14851">
    <property type="entry name" value="FAM176"/>
    <property type="match status" value="1"/>
</dbReference>
<sequence>MDAPRRDMELLSNSLAAYAHIRANPESFGLYFVLGVCFGLLLTLCLLVISISWAPRPRPRGPAQRRDPRSSTLEPEDDDEDEEDTVTRLGPDDTLPGPELSAEPDGPLNVNVFTSAEELERAQRLEERERILREIWRTGQPDLLGTGTLGPSPTATGTLGRMHYY</sequence>